<keyword id="KW-0067">ATP-binding</keyword>
<keyword id="KW-0317">Glutathione biosynthesis</keyword>
<keyword id="KW-0436">Ligase</keyword>
<keyword id="KW-0460">Magnesium</keyword>
<keyword id="KW-0464">Manganese</keyword>
<keyword id="KW-0479">Metal-binding</keyword>
<keyword id="KW-0511">Multifunctional enzyme</keyword>
<keyword id="KW-0547">Nucleotide-binding</keyword>
<keyword id="KW-1185">Reference proteome</keyword>
<reference key="1">
    <citation type="journal article" date="2004" name="Nat. Biotechnol.">
        <title>Complete sequence and comparative genome analysis of the dairy bacterium Streptococcus thermophilus.</title>
        <authorList>
            <person name="Bolotin A."/>
            <person name="Quinquis B."/>
            <person name="Renault P."/>
            <person name="Sorokin A."/>
            <person name="Ehrlich S.D."/>
            <person name="Kulakauskas S."/>
            <person name="Lapidus A."/>
            <person name="Goltsman E."/>
            <person name="Mazur M."/>
            <person name="Pusch G.D."/>
            <person name="Fonstein M."/>
            <person name="Overbeek R."/>
            <person name="Kyprides N."/>
            <person name="Purnelle B."/>
            <person name="Prozzi D."/>
            <person name="Ngui K."/>
            <person name="Masuy D."/>
            <person name="Hancy F."/>
            <person name="Burteau S."/>
            <person name="Boutry M."/>
            <person name="Delcour J."/>
            <person name="Goffeau A."/>
            <person name="Hols P."/>
        </authorList>
    </citation>
    <scope>NUCLEOTIDE SEQUENCE [LARGE SCALE GENOMIC DNA]</scope>
    <source>
        <strain>ATCC BAA-250 / LMG 18311</strain>
    </source>
</reference>
<sequence length="754" mass="85167">MTLNQLLQKLEATSPILQANFGIERESLRVDRQGQLVHTPHPSCLGARSFHPYIQTDFCEFQMELITPVAKSTTEARRFLGAITDVAGRSIATDEVLWPLSMPPRLKAEEIQVAQLENDFERHYRNYLAEKYGTKLQAISGIHYNMELGKDLVEALFQESDQTDMIAFKNALYLKLAQNYLRYRWVITYLFGASPIAEQGFFDQEVPEPMRSFRNSDHGYVNKEEIQVSFVSLEDYVSAIETYIEQGDLIAEKEFYSAVRFRGQKVNRSFLDKGITYLEFRNFDLNPFERIGISQTTMDTVHLLILAFLWLDSPENVDQALAQGHALNEKIALSHPLEPLPSEAKTQDIVTALDQLVQHFGLGDYHQDLVKQVKAAFADPNQTLSAQLLPYIKDKSLAEFALNKALAYHDYDWTAHYALKGYEEMELSTQMLLFDAIQKGIHFEILDEQDQFLKLWHQDHVEYVKNGNMTSKDNYVVPLAMANKTVTKKILADASFPVPSGDEFTSLEEGLAYYPLIKDKQIVVKPKSTNFGLGISIFQEPASLDNYQKALEIAFAEDTSVLVEEFIPGTEYRFFILDGRCEAVLLRVAANVIGDGKHTIRELVAQKNANPLRGRDHRSPLEIIELGDIEQLMLAQQGYTPDDILPEGKKVNLRRNSNISTGGDSIDVTETMDSSYQELAAAMATSMGAWACGVDLIIPDETQIATKENPHCTCIELNFNPSMYMHTYCAEGPGQAITTKILDKLFPEIVAGQT</sequence>
<proteinExistence type="inferred from homology"/>
<comment type="function">
    <text evidence="2">Synthesizes glutathione from L-glutamate and L-cysteine via gamma-L-glutamyl-L-cysteine.</text>
</comment>
<comment type="catalytic activity">
    <reaction evidence="2">
        <text>L-cysteine + L-glutamate + ATP = gamma-L-glutamyl-L-cysteine + ADP + phosphate + H(+)</text>
        <dbReference type="Rhea" id="RHEA:13285"/>
        <dbReference type="ChEBI" id="CHEBI:15378"/>
        <dbReference type="ChEBI" id="CHEBI:29985"/>
        <dbReference type="ChEBI" id="CHEBI:30616"/>
        <dbReference type="ChEBI" id="CHEBI:35235"/>
        <dbReference type="ChEBI" id="CHEBI:43474"/>
        <dbReference type="ChEBI" id="CHEBI:58173"/>
        <dbReference type="ChEBI" id="CHEBI:456216"/>
        <dbReference type="EC" id="6.3.2.2"/>
    </reaction>
</comment>
<comment type="catalytic activity">
    <reaction evidence="2">
        <text>gamma-L-glutamyl-L-cysteine + glycine + ATP = glutathione + ADP + phosphate + H(+)</text>
        <dbReference type="Rhea" id="RHEA:13557"/>
        <dbReference type="ChEBI" id="CHEBI:15378"/>
        <dbReference type="ChEBI" id="CHEBI:30616"/>
        <dbReference type="ChEBI" id="CHEBI:43474"/>
        <dbReference type="ChEBI" id="CHEBI:57305"/>
        <dbReference type="ChEBI" id="CHEBI:57925"/>
        <dbReference type="ChEBI" id="CHEBI:58173"/>
        <dbReference type="ChEBI" id="CHEBI:456216"/>
        <dbReference type="EC" id="6.3.2.3"/>
    </reaction>
</comment>
<comment type="cofactor">
    <cofactor evidence="1">
        <name>Mg(2+)</name>
        <dbReference type="ChEBI" id="CHEBI:18420"/>
    </cofactor>
    <cofactor evidence="1">
        <name>Mn(2+)</name>
        <dbReference type="ChEBI" id="CHEBI:29035"/>
    </cofactor>
    <text evidence="1">Binds 2 magnesium or manganese ions per subunit.</text>
</comment>
<comment type="pathway">
    <text evidence="2">Sulfur metabolism; glutathione biosynthesis; glutathione from L-cysteine and L-glutamate: step 1/2.</text>
</comment>
<comment type="pathway">
    <text evidence="2">Sulfur metabolism; glutathione biosynthesis; glutathione from L-cysteine and L-glutamate: step 2/2.</text>
</comment>
<comment type="subunit">
    <text evidence="2">Monomer.</text>
</comment>
<comment type="similarity">
    <text evidence="2">In the N-terminal section; belongs to the glutamate--cysteine ligase type 1 family. Type 2 subfamily.</text>
</comment>
<accession>Q5M3J8</accession>
<dbReference type="EC" id="6.3.2.2" evidence="2"/>
<dbReference type="EC" id="6.3.2.3" evidence="2"/>
<dbReference type="EMBL" id="CP000023">
    <property type="protein sequence ID" value="AAV61026.1"/>
    <property type="molecule type" value="Genomic_DNA"/>
</dbReference>
<dbReference type="RefSeq" id="WP_011226281.1">
    <property type="nucleotide sequence ID" value="NC_006448.1"/>
</dbReference>
<dbReference type="SMR" id="Q5M3J8"/>
<dbReference type="STRING" id="264199.stu1413"/>
<dbReference type="KEGG" id="stl:stu1413"/>
<dbReference type="PATRIC" id="fig|264199.4.peg.1388"/>
<dbReference type="eggNOG" id="COG1181">
    <property type="taxonomic scope" value="Bacteria"/>
</dbReference>
<dbReference type="eggNOG" id="COG2918">
    <property type="taxonomic scope" value="Bacteria"/>
</dbReference>
<dbReference type="HOGENOM" id="CLU_020728_1_0_9"/>
<dbReference type="UniPathway" id="UPA00142">
    <property type="reaction ID" value="UER00209"/>
</dbReference>
<dbReference type="UniPathway" id="UPA00142">
    <property type="reaction ID" value="UER00210"/>
</dbReference>
<dbReference type="Proteomes" id="UP000001170">
    <property type="component" value="Chromosome"/>
</dbReference>
<dbReference type="GO" id="GO:0005829">
    <property type="term" value="C:cytosol"/>
    <property type="evidence" value="ECO:0007669"/>
    <property type="project" value="TreeGrafter"/>
</dbReference>
<dbReference type="GO" id="GO:0005524">
    <property type="term" value="F:ATP binding"/>
    <property type="evidence" value="ECO:0007669"/>
    <property type="project" value="UniProtKB-UniRule"/>
</dbReference>
<dbReference type="GO" id="GO:0004357">
    <property type="term" value="F:glutamate-cysteine ligase activity"/>
    <property type="evidence" value="ECO:0007669"/>
    <property type="project" value="UniProtKB-UniRule"/>
</dbReference>
<dbReference type="GO" id="GO:0004363">
    <property type="term" value="F:glutathione synthase activity"/>
    <property type="evidence" value="ECO:0007669"/>
    <property type="project" value="UniProtKB-UniRule"/>
</dbReference>
<dbReference type="GO" id="GO:0046872">
    <property type="term" value="F:metal ion binding"/>
    <property type="evidence" value="ECO:0007669"/>
    <property type="project" value="UniProtKB-KW"/>
</dbReference>
<dbReference type="Gene3D" id="3.30.590.20">
    <property type="match status" value="1"/>
</dbReference>
<dbReference type="Gene3D" id="3.30.470.20">
    <property type="entry name" value="ATP-grasp fold, B domain"/>
    <property type="match status" value="2"/>
</dbReference>
<dbReference type="HAMAP" id="MF_00782">
    <property type="entry name" value="Glut_biosynth"/>
    <property type="match status" value="1"/>
</dbReference>
<dbReference type="InterPro" id="IPR011761">
    <property type="entry name" value="ATP-grasp"/>
</dbReference>
<dbReference type="InterPro" id="IPR014746">
    <property type="entry name" value="Gln_synth/guanido_kin_cat_dom"/>
</dbReference>
<dbReference type="InterPro" id="IPR007370">
    <property type="entry name" value="Glu_cys_ligase"/>
</dbReference>
<dbReference type="InterPro" id="IPR006335">
    <property type="entry name" value="Glut_biosynth"/>
</dbReference>
<dbReference type="InterPro" id="IPR006334">
    <property type="entry name" value="Glut_cys_ligase"/>
</dbReference>
<dbReference type="InterPro" id="IPR040657">
    <property type="entry name" value="GshAB_ATP-grasp"/>
</dbReference>
<dbReference type="NCBIfam" id="TIGR01435">
    <property type="entry name" value="glu_cys_lig_rel"/>
    <property type="match status" value="1"/>
</dbReference>
<dbReference type="NCBIfam" id="NF002688">
    <property type="entry name" value="PRK02471.1"/>
    <property type="match status" value="1"/>
</dbReference>
<dbReference type="PANTHER" id="PTHR38761">
    <property type="entry name" value="GLUTAMATE--CYSTEINE LIGASE"/>
    <property type="match status" value="1"/>
</dbReference>
<dbReference type="PANTHER" id="PTHR38761:SF1">
    <property type="entry name" value="GLUTAMATE--CYSTEINE LIGASE"/>
    <property type="match status" value="1"/>
</dbReference>
<dbReference type="Pfam" id="PF18419">
    <property type="entry name" value="ATP-grasp_6"/>
    <property type="match status" value="1"/>
</dbReference>
<dbReference type="Pfam" id="PF04262">
    <property type="entry name" value="Glu_cys_ligase"/>
    <property type="match status" value="2"/>
</dbReference>
<dbReference type="SUPFAM" id="SSF55931">
    <property type="entry name" value="Glutamine synthetase/guanido kinase"/>
    <property type="match status" value="1"/>
</dbReference>
<dbReference type="SUPFAM" id="SSF56059">
    <property type="entry name" value="Glutathione synthetase ATP-binding domain-like"/>
    <property type="match status" value="1"/>
</dbReference>
<dbReference type="PROSITE" id="PS50975">
    <property type="entry name" value="ATP_GRASP"/>
    <property type="match status" value="1"/>
</dbReference>
<organism>
    <name type="scientific">Streptococcus thermophilus (strain ATCC BAA-250 / LMG 18311)</name>
    <dbReference type="NCBI Taxonomy" id="264199"/>
    <lineage>
        <taxon>Bacteria</taxon>
        <taxon>Bacillati</taxon>
        <taxon>Bacillota</taxon>
        <taxon>Bacilli</taxon>
        <taxon>Lactobacillales</taxon>
        <taxon>Streptococcaceae</taxon>
        <taxon>Streptococcus</taxon>
    </lineage>
</organism>
<protein>
    <recommendedName>
        <fullName evidence="2">Glutathione biosynthesis bifunctional protein GshAB</fullName>
    </recommendedName>
    <alternativeName>
        <fullName evidence="2">Gamma-GCS-GS</fullName>
        <shortName evidence="2">GCS-GS</shortName>
    </alternativeName>
    <domain>
        <recommendedName>
            <fullName evidence="2">Glutamate--cysteine ligase</fullName>
            <ecNumber evidence="2">6.3.2.2</ecNumber>
        </recommendedName>
        <alternativeName>
            <fullName evidence="2">Gamma-ECS</fullName>
            <shortName evidence="2">GCS</shortName>
        </alternativeName>
        <alternativeName>
            <fullName evidence="2">Gamma-glutamylcysteine synthetase</fullName>
        </alternativeName>
    </domain>
    <domain>
        <recommendedName>
            <fullName evidence="2">Glutathione synthetase</fullName>
            <ecNumber evidence="2">6.3.2.3</ecNumber>
        </recommendedName>
        <alternativeName>
            <fullName evidence="2">GSH synthetase</fullName>
            <shortName evidence="2">GS</shortName>
            <shortName evidence="2">GSH-S</shortName>
            <shortName evidence="2">GSHase</shortName>
        </alternativeName>
        <alternativeName>
            <fullName evidence="2">Glutathione synthase</fullName>
        </alternativeName>
    </domain>
</protein>
<feature type="chain" id="PRO_0000192562" description="Glutathione biosynthesis bifunctional protein GshAB">
    <location>
        <begin position="1"/>
        <end position="754"/>
    </location>
</feature>
<feature type="domain" description="ATP-grasp" evidence="2">
    <location>
        <begin position="488"/>
        <end position="746"/>
    </location>
</feature>
<feature type="region of interest" description="Glutamate--cysteine ligase">
    <location>
        <begin position="1"/>
        <end position="332"/>
    </location>
</feature>
<feature type="binding site" evidence="2">
    <location>
        <begin position="515"/>
        <end position="573"/>
    </location>
    <ligand>
        <name>ATP</name>
        <dbReference type="ChEBI" id="CHEBI:30616"/>
    </ligand>
</feature>
<feature type="binding site" evidence="2">
    <location>
        <position position="695"/>
    </location>
    <ligand>
        <name>Mg(2+)</name>
        <dbReference type="ChEBI" id="CHEBI:18420"/>
        <label>1</label>
    </ligand>
</feature>
<feature type="binding site" evidence="2">
    <location>
        <position position="695"/>
    </location>
    <ligand>
        <name>Mn(2+)</name>
        <dbReference type="ChEBI" id="CHEBI:29035"/>
        <label>1</label>
    </ligand>
</feature>
<feature type="binding site" evidence="2">
    <location>
        <position position="716"/>
    </location>
    <ligand>
        <name>Mg(2+)</name>
        <dbReference type="ChEBI" id="CHEBI:18420"/>
        <label>1</label>
    </ligand>
</feature>
<feature type="binding site" evidence="2">
    <location>
        <position position="716"/>
    </location>
    <ligand>
        <name>Mg(2+)</name>
        <dbReference type="ChEBI" id="CHEBI:18420"/>
        <label>2</label>
    </ligand>
</feature>
<feature type="binding site" evidence="2">
    <location>
        <position position="716"/>
    </location>
    <ligand>
        <name>Mn(2+)</name>
        <dbReference type="ChEBI" id="CHEBI:29035"/>
        <label>1</label>
    </ligand>
</feature>
<feature type="binding site" evidence="2">
    <location>
        <position position="716"/>
    </location>
    <ligand>
        <name>Mn(2+)</name>
        <dbReference type="ChEBI" id="CHEBI:29035"/>
        <label>2</label>
    </ligand>
</feature>
<feature type="binding site" evidence="2">
    <location>
        <position position="718"/>
    </location>
    <ligand>
        <name>Mg(2+)</name>
        <dbReference type="ChEBI" id="CHEBI:18420"/>
        <label>2</label>
    </ligand>
</feature>
<feature type="binding site" evidence="2">
    <location>
        <position position="718"/>
    </location>
    <ligand>
        <name>Mn(2+)</name>
        <dbReference type="ChEBI" id="CHEBI:29035"/>
        <label>2</label>
    </ligand>
</feature>
<gene>
    <name evidence="2" type="primary">gshAB</name>
    <name evidence="2" type="synonym">gshF</name>
    <name type="ordered locus">stu1413</name>
</gene>
<name>GSHAB_STRT2</name>
<evidence type="ECO:0000250" key="1"/>
<evidence type="ECO:0000255" key="2">
    <source>
        <dbReference type="HAMAP-Rule" id="MF_00782"/>
    </source>
</evidence>